<name>S2538_XENTR</name>
<accession>Q6DJ08</accession>
<protein>
    <recommendedName>
        <fullName evidence="3">Mitochondrial glycine transporter</fullName>
    </recommendedName>
    <alternativeName>
        <fullName evidence="3">Solute carrier family 25 member 38</fullName>
    </alternativeName>
</protein>
<sequence>MSDALVMAGEPLMSGNCFSQMHPVFKAFVCGSLSGTCSTLLFQPLDLVKTRLQAHQLSASAAGSRPRMLNLFIKVIRNENILGLWRGVSPSFLRCIPGVGLYFSTLYTLKHHFFSERDPKPLESVMLGAGSRTVAAVCMLPFTVVKTRYESGKYGYKSVYGALKNIYKTEGPRGLFSGLTATLMRDAPFSGIYLMFYTRAKKLVPQDQIDPLFSPVLNFGCGIVAGILASVATQPADVIKTHIQLSHEKCHWTGQVALNIYQNHGLTGFFRGGLPRALRRTLMAAMAWTVYEQMMEKMGLKS</sequence>
<comment type="function">
    <text evidence="3">Mitochondrial glycine transporter that imports glycine into the mitochondrial matrix. Plays an important role in providing glycine for the first enzymatic step in heme biosynthesis, the condensation of glycine with succinyl-CoA to produce 5-aminolevulinate (ALA) in the mitochondrial matrix. Required during erythropoiesis.</text>
</comment>
<comment type="function">
    <text evidence="1">May play a role as pro-apoptotic protein that induces caspase-dependent apoptosis.</text>
</comment>
<comment type="catalytic activity">
    <reaction evidence="2">
        <text>glycine(in) = glycine(out)</text>
        <dbReference type="Rhea" id="RHEA:70715"/>
        <dbReference type="ChEBI" id="CHEBI:57305"/>
    </reaction>
</comment>
<comment type="subcellular location">
    <subcellularLocation>
        <location evidence="3">Mitochondrion inner membrane</location>
        <topology evidence="3">Multi-pass membrane protein</topology>
    </subcellularLocation>
</comment>
<comment type="similarity">
    <text evidence="3">Belongs to the mitochondrial carrier (TC 2.A.29) family. SLC25A38 subfamily.</text>
</comment>
<feature type="chain" id="PRO_0000291807" description="Mitochondrial glycine transporter">
    <location>
        <begin position="1"/>
        <end position="302"/>
    </location>
</feature>
<feature type="transmembrane region" description="Helical; Name=1" evidence="3">
    <location>
        <begin position="28"/>
        <end position="53"/>
    </location>
</feature>
<feature type="transmembrane region" description="Helical; Name=2" evidence="3">
    <location>
        <begin position="87"/>
        <end position="113"/>
    </location>
</feature>
<feature type="transmembrane region" description="Helical; Name=3" evidence="3">
    <location>
        <begin position="125"/>
        <end position="150"/>
    </location>
</feature>
<feature type="transmembrane region" description="Helical; Name=4" evidence="3">
    <location>
        <begin position="178"/>
        <end position="201"/>
    </location>
</feature>
<feature type="transmembrane region" description="Helical; Name=5" evidence="3">
    <location>
        <begin position="217"/>
        <end position="243"/>
    </location>
</feature>
<feature type="transmembrane region" description="Helical; Name=6" evidence="3">
    <location>
        <begin position="272"/>
        <end position="290"/>
    </location>
</feature>
<feature type="repeat" description="Solcar 1" evidence="3">
    <location>
        <begin position="22"/>
        <end position="112"/>
    </location>
</feature>
<feature type="repeat" description="Solcar 2" evidence="3">
    <location>
        <begin position="119"/>
        <end position="203"/>
    </location>
</feature>
<feature type="repeat" description="Solcar 3" evidence="3">
    <location>
        <begin position="213"/>
        <end position="297"/>
    </location>
</feature>
<evidence type="ECO:0000250" key="1">
    <source>
        <dbReference type="UniProtKB" id="Q91XD8"/>
    </source>
</evidence>
<evidence type="ECO:0000250" key="2">
    <source>
        <dbReference type="UniProtKB" id="Q96DW6"/>
    </source>
</evidence>
<evidence type="ECO:0000255" key="3">
    <source>
        <dbReference type="HAMAP-Rule" id="MF_03064"/>
    </source>
</evidence>
<proteinExistence type="evidence at transcript level"/>
<reference key="1">
    <citation type="submission" date="2004-06" db="EMBL/GenBank/DDBJ databases">
        <authorList>
            <consortium name="NIH - Xenopus Gene Collection (XGC) project"/>
        </authorList>
    </citation>
    <scope>NUCLEOTIDE SEQUENCE [LARGE SCALE MRNA]</scope>
</reference>
<keyword id="KW-0472">Membrane</keyword>
<keyword id="KW-0496">Mitochondrion</keyword>
<keyword id="KW-0999">Mitochondrion inner membrane</keyword>
<keyword id="KW-1185">Reference proteome</keyword>
<keyword id="KW-0677">Repeat</keyword>
<keyword id="KW-0812">Transmembrane</keyword>
<keyword id="KW-1133">Transmembrane helix</keyword>
<keyword id="KW-0813">Transport</keyword>
<dbReference type="EMBL" id="BC075377">
    <property type="protein sequence ID" value="AAH75377.1"/>
    <property type="molecule type" value="mRNA"/>
</dbReference>
<dbReference type="RefSeq" id="NP_001004921.1">
    <property type="nucleotide sequence ID" value="NM_001004921.1"/>
</dbReference>
<dbReference type="SMR" id="Q6DJ08"/>
<dbReference type="FunCoup" id="Q6DJ08">
    <property type="interactions" value="928"/>
</dbReference>
<dbReference type="STRING" id="8364.ENSXETP00000031412"/>
<dbReference type="PaxDb" id="8364-ENSXETP00000000481"/>
<dbReference type="DNASU" id="448302"/>
<dbReference type="GeneID" id="448302"/>
<dbReference type="KEGG" id="xtr:448302"/>
<dbReference type="AGR" id="Xenbase:XB-GENE-5814283"/>
<dbReference type="CTD" id="54977"/>
<dbReference type="Xenbase" id="XB-GENE-5814283">
    <property type="gene designation" value="slc25a38"/>
</dbReference>
<dbReference type="eggNOG" id="KOG0766">
    <property type="taxonomic scope" value="Eukaryota"/>
</dbReference>
<dbReference type="HOGENOM" id="CLU_015166_0_3_1"/>
<dbReference type="InParanoid" id="Q6DJ08"/>
<dbReference type="OMA" id="RYESFHY"/>
<dbReference type="OrthoDB" id="1924968at2759"/>
<dbReference type="PhylomeDB" id="Q6DJ08"/>
<dbReference type="TreeFam" id="TF332793"/>
<dbReference type="Proteomes" id="UP000008143">
    <property type="component" value="Chromosome 4"/>
</dbReference>
<dbReference type="Bgee" id="ENSXETG00000000232">
    <property type="expression patterns" value="Expressed in egg cell and 12 other cell types or tissues"/>
</dbReference>
<dbReference type="GO" id="GO:0005743">
    <property type="term" value="C:mitochondrial inner membrane"/>
    <property type="evidence" value="ECO:0007669"/>
    <property type="project" value="UniProtKB-SubCell"/>
</dbReference>
<dbReference type="GO" id="GO:0015187">
    <property type="term" value="F:glycine transmembrane transporter activity"/>
    <property type="evidence" value="ECO:0007669"/>
    <property type="project" value="UniProtKB-UniRule"/>
</dbReference>
<dbReference type="GO" id="GO:0030218">
    <property type="term" value="P:erythrocyte differentiation"/>
    <property type="evidence" value="ECO:0000250"/>
    <property type="project" value="UniProtKB"/>
</dbReference>
<dbReference type="GO" id="GO:1904983">
    <property type="term" value="P:glycine import into mitochondrion"/>
    <property type="evidence" value="ECO:0007669"/>
    <property type="project" value="UniProtKB-UniRule"/>
</dbReference>
<dbReference type="FunFam" id="1.50.40.10:FF:000100">
    <property type="entry name" value="Mitochondrial glycine transporter"/>
    <property type="match status" value="1"/>
</dbReference>
<dbReference type="FunFam" id="1.50.40.10:FF:000118">
    <property type="entry name" value="Mitochondrial glycine transporter"/>
    <property type="match status" value="1"/>
</dbReference>
<dbReference type="Gene3D" id="1.50.40.10">
    <property type="entry name" value="Mitochondrial carrier domain"/>
    <property type="match status" value="2"/>
</dbReference>
<dbReference type="HAMAP" id="MF_03064">
    <property type="entry name" value="SLC25A38"/>
    <property type="match status" value="1"/>
</dbReference>
<dbReference type="InterPro" id="IPR030847">
    <property type="entry name" value="Hem25/SLC25A38"/>
</dbReference>
<dbReference type="InterPro" id="IPR018108">
    <property type="entry name" value="Mitochondrial_sb/sol_carrier"/>
</dbReference>
<dbReference type="InterPro" id="IPR023395">
    <property type="entry name" value="Mt_carrier_dom_sf"/>
</dbReference>
<dbReference type="PANTHER" id="PTHR46181">
    <property type="entry name" value="MITOCHONDRIAL GLYCINE TRANSPORTER"/>
    <property type="match status" value="1"/>
</dbReference>
<dbReference type="PANTHER" id="PTHR46181:SF3">
    <property type="entry name" value="MITOCHONDRIAL GLYCINE TRANSPORTER"/>
    <property type="match status" value="1"/>
</dbReference>
<dbReference type="Pfam" id="PF00153">
    <property type="entry name" value="Mito_carr"/>
    <property type="match status" value="3"/>
</dbReference>
<dbReference type="SUPFAM" id="SSF103506">
    <property type="entry name" value="Mitochondrial carrier"/>
    <property type="match status" value="1"/>
</dbReference>
<dbReference type="PROSITE" id="PS50920">
    <property type="entry name" value="SOLCAR"/>
    <property type="match status" value="3"/>
</dbReference>
<organism>
    <name type="scientific">Xenopus tropicalis</name>
    <name type="common">Western clawed frog</name>
    <name type="synonym">Silurana tropicalis</name>
    <dbReference type="NCBI Taxonomy" id="8364"/>
    <lineage>
        <taxon>Eukaryota</taxon>
        <taxon>Metazoa</taxon>
        <taxon>Chordata</taxon>
        <taxon>Craniata</taxon>
        <taxon>Vertebrata</taxon>
        <taxon>Euteleostomi</taxon>
        <taxon>Amphibia</taxon>
        <taxon>Batrachia</taxon>
        <taxon>Anura</taxon>
        <taxon>Pipoidea</taxon>
        <taxon>Pipidae</taxon>
        <taxon>Xenopodinae</taxon>
        <taxon>Xenopus</taxon>
        <taxon>Silurana</taxon>
    </lineage>
</organism>
<gene>
    <name evidence="3" type="primary">slc25a38</name>
</gene>